<sequence length="50" mass="5945">MSKLMKGRKIRLAKACEQNRRVPAWVMIKTNRAVASHPKRRNWRRSSLKV</sequence>
<organism>
    <name type="scientific">Methanoculleus marisnigri (strain ATCC 35101 / DSM 1498 / JR1)</name>
    <dbReference type="NCBI Taxonomy" id="368407"/>
    <lineage>
        <taxon>Archaea</taxon>
        <taxon>Methanobacteriati</taxon>
        <taxon>Methanobacteriota</taxon>
        <taxon>Stenosarchaea group</taxon>
        <taxon>Methanomicrobia</taxon>
        <taxon>Methanomicrobiales</taxon>
        <taxon>Methanomicrobiaceae</taxon>
        <taxon>Methanoculleus</taxon>
    </lineage>
</organism>
<proteinExistence type="inferred from homology"/>
<gene>
    <name evidence="1" type="primary">rpl39e</name>
    <name type="ordered locus">Memar_1970</name>
</gene>
<accession>A3CWZ6</accession>
<keyword id="KW-0687">Ribonucleoprotein</keyword>
<keyword id="KW-0689">Ribosomal protein</keyword>
<protein>
    <recommendedName>
        <fullName evidence="1">Large ribosomal subunit protein eL39</fullName>
    </recommendedName>
    <alternativeName>
        <fullName evidence="2">50S ribosomal protein L39e</fullName>
    </alternativeName>
</protein>
<dbReference type="EMBL" id="CP000562">
    <property type="protein sequence ID" value="ABN57896.1"/>
    <property type="molecule type" value="Genomic_DNA"/>
</dbReference>
<dbReference type="RefSeq" id="WP_011844805.1">
    <property type="nucleotide sequence ID" value="NC_009051.1"/>
</dbReference>
<dbReference type="SMR" id="A3CWZ6"/>
<dbReference type="STRING" id="368407.Memar_1970"/>
<dbReference type="KEGG" id="mem:Memar_1970"/>
<dbReference type="eggNOG" id="arCOG04177">
    <property type="taxonomic scope" value="Archaea"/>
</dbReference>
<dbReference type="HOGENOM" id="CLU_181948_4_0_2"/>
<dbReference type="OrthoDB" id="65887at2157"/>
<dbReference type="Proteomes" id="UP000002146">
    <property type="component" value="Chromosome"/>
</dbReference>
<dbReference type="GO" id="GO:1990904">
    <property type="term" value="C:ribonucleoprotein complex"/>
    <property type="evidence" value="ECO:0007669"/>
    <property type="project" value="UniProtKB-KW"/>
</dbReference>
<dbReference type="GO" id="GO:0005840">
    <property type="term" value="C:ribosome"/>
    <property type="evidence" value="ECO:0007669"/>
    <property type="project" value="UniProtKB-KW"/>
</dbReference>
<dbReference type="GO" id="GO:0003735">
    <property type="term" value="F:structural constituent of ribosome"/>
    <property type="evidence" value="ECO:0007669"/>
    <property type="project" value="InterPro"/>
</dbReference>
<dbReference type="GO" id="GO:0006412">
    <property type="term" value="P:translation"/>
    <property type="evidence" value="ECO:0007669"/>
    <property type="project" value="UniProtKB-UniRule"/>
</dbReference>
<dbReference type="FunFam" id="1.10.1620.10:FF:000001">
    <property type="entry name" value="60S ribosomal protein-like L39"/>
    <property type="match status" value="1"/>
</dbReference>
<dbReference type="Gene3D" id="1.10.1620.10">
    <property type="entry name" value="Ribosomal protein L39e"/>
    <property type="match status" value="1"/>
</dbReference>
<dbReference type="HAMAP" id="MF_00629">
    <property type="entry name" value="Ribosomal_eL39"/>
    <property type="match status" value="1"/>
</dbReference>
<dbReference type="InterPro" id="IPR000077">
    <property type="entry name" value="Ribosomal_eL39"/>
</dbReference>
<dbReference type="InterPro" id="IPR020083">
    <property type="entry name" value="Ribosomal_eL39_CS"/>
</dbReference>
<dbReference type="InterPro" id="IPR023626">
    <property type="entry name" value="Ribosomal_eL39_dom_sf"/>
</dbReference>
<dbReference type="NCBIfam" id="NF002316">
    <property type="entry name" value="PRK01242.1"/>
    <property type="match status" value="1"/>
</dbReference>
<dbReference type="Pfam" id="PF00832">
    <property type="entry name" value="Ribosomal_L39"/>
    <property type="match status" value="1"/>
</dbReference>
<dbReference type="SUPFAM" id="SSF48662">
    <property type="entry name" value="Ribosomal protein L39e"/>
    <property type="match status" value="1"/>
</dbReference>
<dbReference type="PROSITE" id="PS00051">
    <property type="entry name" value="RIBOSOMAL_L39E"/>
    <property type="match status" value="1"/>
</dbReference>
<comment type="similarity">
    <text evidence="1">Belongs to the eukaryotic ribosomal protein eL39 family.</text>
</comment>
<reference key="1">
    <citation type="journal article" date="2009" name="Stand. Genomic Sci.">
        <title>Complete genome sequence of Methanoculleus marisnigri Romesser et al. 1981 type strain JR1.</title>
        <authorList>
            <person name="Anderson I.J."/>
            <person name="Sieprawska-Lupa M."/>
            <person name="Lapidus A."/>
            <person name="Nolan M."/>
            <person name="Copeland A."/>
            <person name="Glavina Del Rio T."/>
            <person name="Tice H."/>
            <person name="Dalin E."/>
            <person name="Barry K."/>
            <person name="Saunders E."/>
            <person name="Han C."/>
            <person name="Brettin T."/>
            <person name="Detter J.C."/>
            <person name="Bruce D."/>
            <person name="Mikhailova N."/>
            <person name="Pitluck S."/>
            <person name="Hauser L."/>
            <person name="Land M."/>
            <person name="Lucas S."/>
            <person name="Richardson P."/>
            <person name="Whitman W.B."/>
            <person name="Kyrpides N.C."/>
        </authorList>
    </citation>
    <scope>NUCLEOTIDE SEQUENCE [LARGE SCALE GENOMIC DNA]</scope>
    <source>
        <strain>ATCC 35101 / DSM 1498 / JR1</strain>
    </source>
</reference>
<evidence type="ECO:0000255" key="1">
    <source>
        <dbReference type="HAMAP-Rule" id="MF_00629"/>
    </source>
</evidence>
<evidence type="ECO:0000305" key="2"/>
<name>RL39_METMJ</name>
<feature type="chain" id="PRO_1000051690" description="Large ribosomal subunit protein eL39">
    <location>
        <begin position="1"/>
        <end position="50"/>
    </location>
</feature>